<evidence type="ECO:0000255" key="1">
    <source>
        <dbReference type="HAMAP-Rule" id="MF_01522"/>
    </source>
</evidence>
<reference key="1">
    <citation type="journal article" date="2006" name="Nat. Biotechnol.">
        <title>Complete genome sequence of the entomopathogenic and metabolically versatile soil bacterium Pseudomonas entomophila.</title>
        <authorList>
            <person name="Vodovar N."/>
            <person name="Vallenet D."/>
            <person name="Cruveiller S."/>
            <person name="Rouy Z."/>
            <person name="Barbe V."/>
            <person name="Acosta C."/>
            <person name="Cattolico L."/>
            <person name="Jubin C."/>
            <person name="Lajus A."/>
            <person name="Segurens B."/>
            <person name="Vacherie B."/>
            <person name="Wincker P."/>
            <person name="Weissenbach J."/>
            <person name="Lemaitre B."/>
            <person name="Medigue C."/>
            <person name="Boccard F."/>
        </authorList>
    </citation>
    <scope>NUCLEOTIDE SEQUENCE [LARGE SCALE GENOMIC DNA]</scope>
    <source>
        <strain>L48</strain>
    </source>
</reference>
<dbReference type="EMBL" id="CT573326">
    <property type="protein sequence ID" value="CAK16803.1"/>
    <property type="molecule type" value="Genomic_DNA"/>
</dbReference>
<dbReference type="RefSeq" id="WP_011535174.1">
    <property type="nucleotide sequence ID" value="NC_008027.1"/>
</dbReference>
<dbReference type="STRING" id="384676.PSEEN4112"/>
<dbReference type="GeneID" id="32807127"/>
<dbReference type="KEGG" id="pen:PSEEN4112"/>
<dbReference type="eggNOG" id="COG3158">
    <property type="taxonomic scope" value="Bacteria"/>
</dbReference>
<dbReference type="HOGENOM" id="CLU_008142_4_2_6"/>
<dbReference type="OrthoDB" id="9805577at2"/>
<dbReference type="Proteomes" id="UP000000658">
    <property type="component" value="Chromosome"/>
</dbReference>
<dbReference type="GO" id="GO:0005886">
    <property type="term" value="C:plasma membrane"/>
    <property type="evidence" value="ECO:0007669"/>
    <property type="project" value="UniProtKB-SubCell"/>
</dbReference>
<dbReference type="GO" id="GO:0015079">
    <property type="term" value="F:potassium ion transmembrane transporter activity"/>
    <property type="evidence" value="ECO:0007669"/>
    <property type="project" value="UniProtKB-UniRule"/>
</dbReference>
<dbReference type="GO" id="GO:0015293">
    <property type="term" value="F:symporter activity"/>
    <property type="evidence" value="ECO:0007669"/>
    <property type="project" value="UniProtKB-UniRule"/>
</dbReference>
<dbReference type="HAMAP" id="MF_01522">
    <property type="entry name" value="Kup"/>
    <property type="match status" value="1"/>
</dbReference>
<dbReference type="InterPro" id="IPR003855">
    <property type="entry name" value="K+_transporter"/>
</dbReference>
<dbReference type="InterPro" id="IPR053952">
    <property type="entry name" value="K_trans_C"/>
</dbReference>
<dbReference type="InterPro" id="IPR053951">
    <property type="entry name" value="K_trans_N"/>
</dbReference>
<dbReference type="InterPro" id="IPR023051">
    <property type="entry name" value="Kup"/>
</dbReference>
<dbReference type="PANTHER" id="PTHR30540:SF79">
    <property type="entry name" value="LOW AFFINITY POTASSIUM TRANSPORT SYSTEM PROTEIN KUP"/>
    <property type="match status" value="1"/>
</dbReference>
<dbReference type="PANTHER" id="PTHR30540">
    <property type="entry name" value="OSMOTIC STRESS POTASSIUM TRANSPORTER"/>
    <property type="match status" value="1"/>
</dbReference>
<dbReference type="Pfam" id="PF02705">
    <property type="entry name" value="K_trans"/>
    <property type="match status" value="1"/>
</dbReference>
<dbReference type="Pfam" id="PF22776">
    <property type="entry name" value="K_trans_C"/>
    <property type="match status" value="1"/>
</dbReference>
<accession>Q1I6D2</accession>
<protein>
    <recommendedName>
        <fullName evidence="1">Probable potassium transport system protein Kup</fullName>
    </recommendedName>
</protein>
<name>KUP_PSEE4</name>
<feature type="chain" id="PRO_0000279810" description="Probable potassium transport system protein Kup">
    <location>
        <begin position="1"/>
        <end position="636"/>
    </location>
</feature>
<feature type="transmembrane region" description="Helical" evidence="1">
    <location>
        <begin position="22"/>
        <end position="42"/>
    </location>
</feature>
<feature type="transmembrane region" description="Helical" evidence="1">
    <location>
        <begin position="64"/>
        <end position="84"/>
    </location>
</feature>
<feature type="transmembrane region" description="Helical" evidence="1">
    <location>
        <begin position="114"/>
        <end position="134"/>
    </location>
</feature>
<feature type="transmembrane region" description="Helical" evidence="1">
    <location>
        <begin position="150"/>
        <end position="170"/>
    </location>
</feature>
<feature type="transmembrane region" description="Helical" evidence="1">
    <location>
        <begin position="182"/>
        <end position="202"/>
    </location>
</feature>
<feature type="transmembrane region" description="Helical" evidence="1">
    <location>
        <begin position="220"/>
        <end position="240"/>
    </location>
</feature>
<feature type="transmembrane region" description="Helical" evidence="1">
    <location>
        <begin position="261"/>
        <end position="281"/>
    </location>
</feature>
<feature type="transmembrane region" description="Helical" evidence="1">
    <location>
        <begin position="293"/>
        <end position="313"/>
    </location>
</feature>
<feature type="transmembrane region" description="Helical" evidence="1">
    <location>
        <begin position="351"/>
        <end position="371"/>
    </location>
</feature>
<feature type="transmembrane region" description="Helical" evidence="1">
    <location>
        <begin position="383"/>
        <end position="403"/>
    </location>
</feature>
<feature type="transmembrane region" description="Helical" evidence="1">
    <location>
        <begin position="408"/>
        <end position="428"/>
    </location>
</feature>
<feature type="transmembrane region" description="Helical" evidence="1">
    <location>
        <begin position="433"/>
        <end position="453"/>
    </location>
</feature>
<sequence length="636" mass="68592">MVQASSHAEGGHEGKQGAARSMGLLVAAVGVVYGDIGTSPLYTLKEVFTGGYGVQVNHDGVLGILSLILWSLLWVVSFKYVMFILRADNQGEGGTMALTALARRATAEYPKLRALMVGCGLVGASLFYGDSMITPAVSVLSAVEGMGLAFEGIDHWVVPISLVVLVALFLVQKHGTEKIGKLFGPIMVTWFVVLGALGVHGISQSPEVLKAFNPGWALNFFIVHPGMGVAILGAVVLALTGAEALYADMGHFGRKPIARAWFALVLPALVLNYFGQGAILLQNPEAARNPFYLLAPGWALLPLVGLATMATVIASQAVISGAFSLTRQAIQLGYVPRMQIQHTSSDEQGQIYIGAVNWTLMVGVVLLVIGFESSGALAAAYGVAVTGTMLMTTILVSAVMLLLWKWPPVLAVPLLVGFLLVDGLFFAANVPKIVQGGAFPVLAGIVLFVLMSTWKRGKQILVDRIDEGALPLPVFISSIRVQPPHRVEGTAVFLTARADAVPHALLHNMLHNQVLHSQVVLLTVVSEDRPRVPEHERFEVEAYGDGFFRVLLHFGFMDEPDVPAALKLCHLDDLDFSPMRTTYFLSRETVIASRLEGMSRWRGNLFAFLLKNANGNLRFFNLPLNRVIELGTQVEI</sequence>
<comment type="function">
    <text evidence="1">Transport of potassium into the cell. Likely operates as a K(+):H(+) symporter.</text>
</comment>
<comment type="catalytic activity">
    <reaction evidence="1">
        <text>K(+)(in) + H(+)(in) = K(+)(out) + H(+)(out)</text>
        <dbReference type="Rhea" id="RHEA:28490"/>
        <dbReference type="ChEBI" id="CHEBI:15378"/>
        <dbReference type="ChEBI" id="CHEBI:29103"/>
    </reaction>
    <physiologicalReaction direction="right-to-left" evidence="1">
        <dbReference type="Rhea" id="RHEA:28492"/>
    </physiologicalReaction>
</comment>
<comment type="subcellular location">
    <subcellularLocation>
        <location evidence="1">Cell inner membrane</location>
        <topology evidence="1">Multi-pass membrane protein</topology>
    </subcellularLocation>
</comment>
<comment type="similarity">
    <text evidence="1">Belongs to the HAK/KUP transporter (TC 2.A.72) family.</text>
</comment>
<keyword id="KW-0997">Cell inner membrane</keyword>
<keyword id="KW-1003">Cell membrane</keyword>
<keyword id="KW-0406">Ion transport</keyword>
<keyword id="KW-0472">Membrane</keyword>
<keyword id="KW-0630">Potassium</keyword>
<keyword id="KW-0633">Potassium transport</keyword>
<keyword id="KW-0769">Symport</keyword>
<keyword id="KW-0812">Transmembrane</keyword>
<keyword id="KW-1133">Transmembrane helix</keyword>
<keyword id="KW-0813">Transport</keyword>
<organism>
    <name type="scientific">Pseudomonas entomophila (strain L48)</name>
    <dbReference type="NCBI Taxonomy" id="384676"/>
    <lineage>
        <taxon>Bacteria</taxon>
        <taxon>Pseudomonadati</taxon>
        <taxon>Pseudomonadota</taxon>
        <taxon>Gammaproteobacteria</taxon>
        <taxon>Pseudomonadales</taxon>
        <taxon>Pseudomonadaceae</taxon>
        <taxon>Pseudomonas</taxon>
    </lineage>
</organism>
<gene>
    <name evidence="1" type="primary">kup</name>
    <name type="ordered locus">PSEEN4112</name>
</gene>
<proteinExistence type="inferred from homology"/>